<feature type="chain" id="PRO_0000309137" description="Serine/threonine transporter SstT">
    <location>
        <begin position="1"/>
        <end position="404"/>
    </location>
</feature>
<feature type="transmembrane region" description="Helical" evidence="1">
    <location>
        <begin position="17"/>
        <end position="37"/>
    </location>
</feature>
<feature type="transmembrane region" description="Helical" evidence="1">
    <location>
        <begin position="39"/>
        <end position="59"/>
    </location>
</feature>
<feature type="transmembrane region" description="Helical" evidence="1">
    <location>
        <begin position="75"/>
        <end position="95"/>
    </location>
</feature>
<feature type="transmembrane region" description="Helical" evidence="1">
    <location>
        <begin position="138"/>
        <end position="158"/>
    </location>
</feature>
<feature type="transmembrane region" description="Helical" evidence="1">
    <location>
        <begin position="179"/>
        <end position="199"/>
    </location>
</feature>
<feature type="transmembrane region" description="Helical" evidence="1">
    <location>
        <begin position="212"/>
        <end position="232"/>
    </location>
</feature>
<feature type="transmembrane region" description="Helical" evidence="1">
    <location>
        <begin position="287"/>
        <end position="307"/>
    </location>
</feature>
<feature type="transmembrane region" description="Helical" evidence="1">
    <location>
        <begin position="313"/>
        <end position="333"/>
    </location>
</feature>
<accession>Q9A1E0</accession>
<accession>Q490S4</accession>
<protein>
    <recommendedName>
        <fullName evidence="1">Serine/threonine transporter SstT</fullName>
    </recommendedName>
    <alternativeName>
        <fullName evidence="1">Na(+)/serine-threonine symporter</fullName>
    </alternativeName>
</protein>
<evidence type="ECO:0000255" key="1">
    <source>
        <dbReference type="HAMAP-Rule" id="MF_01582"/>
    </source>
</evidence>
<keyword id="KW-0029">Amino-acid transport</keyword>
<keyword id="KW-1003">Cell membrane</keyword>
<keyword id="KW-0472">Membrane</keyword>
<keyword id="KW-1185">Reference proteome</keyword>
<keyword id="KW-0769">Symport</keyword>
<keyword id="KW-0812">Transmembrane</keyword>
<keyword id="KW-1133">Transmembrane helix</keyword>
<keyword id="KW-0813">Transport</keyword>
<sequence length="404" mass="42554">MKKIYDLWVRVSLIKKIGIGVVIGVMLGILAPDLTGFSILGKLFVGGLKAIAPLLVFALVSQAISHQKKGKQTNMTLIIVLYLFGTFASALVAVLTAYLFPLTLVLNTPVNTELSPPQGVAEVFQSLLLKLVDNPINALATANYIGVLSWAIIFGLALKAASKETKHLIKTAAEVTSQIVVWIINLAPIGIMSLVFTTISENGVGILSDYAFLILVLVGTMLFVALVVNPLIAVLITRQNPYPLVLRCLRESGLTAFFTRSSAANIPVNMQLCQKIGLSKDTYSVSIPLGATINMGGAAITINVLTLAAVHTFGIPIDFLTALLLSVVAAVSACGASGVAGGSLLLIPVACSLFGISNDLAMQVVGVGFIVGVIQDSCETALNSSTDVLFTAIAENAFWKRKKA</sequence>
<reference key="1">
    <citation type="journal article" date="2001" name="Proc. Natl. Acad. Sci. U.S.A.">
        <title>Complete genome sequence of an M1 strain of Streptococcus pyogenes.</title>
        <authorList>
            <person name="Ferretti J.J."/>
            <person name="McShan W.M."/>
            <person name="Ajdic D.J."/>
            <person name="Savic D.J."/>
            <person name="Savic G."/>
            <person name="Lyon K."/>
            <person name="Primeaux C."/>
            <person name="Sezate S."/>
            <person name="Suvorov A.N."/>
            <person name="Kenton S."/>
            <person name="Lai H.S."/>
            <person name="Lin S.P."/>
            <person name="Qian Y."/>
            <person name="Jia H.G."/>
            <person name="Najar F.Z."/>
            <person name="Ren Q."/>
            <person name="Zhu H."/>
            <person name="Song L."/>
            <person name="White J."/>
            <person name="Yuan X."/>
            <person name="Clifton S.W."/>
            <person name="Roe B.A."/>
            <person name="McLaughlin R.E."/>
        </authorList>
    </citation>
    <scope>NUCLEOTIDE SEQUENCE [LARGE SCALE GENOMIC DNA]</scope>
    <source>
        <strain>ATCC 700294 / SF370 / Serotype M1</strain>
    </source>
</reference>
<reference key="2">
    <citation type="journal article" date="2005" name="J. Infect. Dis.">
        <title>Evolutionary origin and emergence of a highly successful clone of serotype M1 group A Streptococcus involved multiple horizontal gene transfer events.</title>
        <authorList>
            <person name="Sumby P."/>
            <person name="Porcella S.F."/>
            <person name="Madrigal A.G."/>
            <person name="Barbian K.D."/>
            <person name="Virtaneva K."/>
            <person name="Ricklefs S.M."/>
            <person name="Sturdevant D.E."/>
            <person name="Graham M.R."/>
            <person name="Vuopio-Varkila J."/>
            <person name="Hoe N.P."/>
            <person name="Musser J.M."/>
        </authorList>
    </citation>
    <scope>NUCLEOTIDE SEQUENCE [LARGE SCALE GENOMIC DNA]</scope>
    <source>
        <strain>ATCC BAA-947 / MGAS5005 / Serotype M1</strain>
    </source>
</reference>
<organism>
    <name type="scientific">Streptococcus pyogenes serotype M1</name>
    <dbReference type="NCBI Taxonomy" id="301447"/>
    <lineage>
        <taxon>Bacteria</taxon>
        <taxon>Bacillati</taxon>
        <taxon>Bacillota</taxon>
        <taxon>Bacilli</taxon>
        <taxon>Lactobacillales</taxon>
        <taxon>Streptococcaceae</taxon>
        <taxon>Streptococcus</taxon>
    </lineage>
</organism>
<name>SSTT_STRP1</name>
<dbReference type="EMBL" id="AE004092">
    <property type="protein sequence ID" value="AAK33382.1"/>
    <property type="molecule type" value="Genomic_DNA"/>
</dbReference>
<dbReference type="EMBL" id="CP000017">
    <property type="protein sequence ID" value="AAZ50894.1"/>
    <property type="molecule type" value="Genomic_DNA"/>
</dbReference>
<dbReference type="RefSeq" id="NP_268661.1">
    <property type="nucleotide sequence ID" value="NC_002737.2"/>
</dbReference>
<dbReference type="SMR" id="Q9A1E0"/>
<dbReference type="PaxDb" id="1314-HKU360_00314"/>
<dbReference type="KEGG" id="spy:SPy_0324"/>
<dbReference type="KEGG" id="spz:M5005_Spy0275"/>
<dbReference type="PATRIC" id="fig|160490.10.peg.282"/>
<dbReference type="HOGENOM" id="CLU_044581_0_0_9"/>
<dbReference type="OMA" id="YIGILTW"/>
<dbReference type="Proteomes" id="UP000000750">
    <property type="component" value="Chromosome"/>
</dbReference>
<dbReference type="GO" id="GO:0005886">
    <property type="term" value="C:plasma membrane"/>
    <property type="evidence" value="ECO:0007669"/>
    <property type="project" value="UniProtKB-SubCell"/>
</dbReference>
<dbReference type="GO" id="GO:0015171">
    <property type="term" value="F:amino acid transmembrane transporter activity"/>
    <property type="evidence" value="ECO:0007669"/>
    <property type="project" value="UniProtKB-UniRule"/>
</dbReference>
<dbReference type="GO" id="GO:0015293">
    <property type="term" value="F:symporter activity"/>
    <property type="evidence" value="ECO:0007669"/>
    <property type="project" value="UniProtKB-UniRule"/>
</dbReference>
<dbReference type="GO" id="GO:0032329">
    <property type="term" value="P:serine transport"/>
    <property type="evidence" value="ECO:0007669"/>
    <property type="project" value="InterPro"/>
</dbReference>
<dbReference type="GO" id="GO:0015826">
    <property type="term" value="P:threonine transport"/>
    <property type="evidence" value="ECO:0007669"/>
    <property type="project" value="InterPro"/>
</dbReference>
<dbReference type="FunFam" id="1.10.3860.10:FF:000003">
    <property type="entry name" value="Serine/threonine transporter sstT"/>
    <property type="match status" value="1"/>
</dbReference>
<dbReference type="Gene3D" id="1.10.3860.10">
    <property type="entry name" value="Sodium:dicarboxylate symporter"/>
    <property type="match status" value="1"/>
</dbReference>
<dbReference type="HAMAP" id="MF_01582">
    <property type="entry name" value="Ser_Thr_transp_SstT"/>
    <property type="match status" value="1"/>
</dbReference>
<dbReference type="InterPro" id="IPR001991">
    <property type="entry name" value="Na-dicarboxylate_symporter"/>
</dbReference>
<dbReference type="InterPro" id="IPR036458">
    <property type="entry name" value="Na:dicarbo_symporter_sf"/>
</dbReference>
<dbReference type="InterPro" id="IPR023025">
    <property type="entry name" value="Ser_Thr_transp_SstT"/>
</dbReference>
<dbReference type="NCBIfam" id="NF010151">
    <property type="entry name" value="PRK13628.1"/>
    <property type="match status" value="1"/>
</dbReference>
<dbReference type="PANTHER" id="PTHR42865">
    <property type="entry name" value="PROTON/GLUTAMATE-ASPARTATE SYMPORTER"/>
    <property type="match status" value="1"/>
</dbReference>
<dbReference type="PANTHER" id="PTHR42865:SF7">
    <property type="entry name" value="PROTON_GLUTAMATE-ASPARTATE SYMPORTER"/>
    <property type="match status" value="1"/>
</dbReference>
<dbReference type="Pfam" id="PF00375">
    <property type="entry name" value="SDF"/>
    <property type="match status" value="1"/>
</dbReference>
<dbReference type="PRINTS" id="PR00173">
    <property type="entry name" value="EDTRNSPORT"/>
</dbReference>
<dbReference type="SUPFAM" id="SSF118215">
    <property type="entry name" value="Proton glutamate symport protein"/>
    <property type="match status" value="1"/>
</dbReference>
<comment type="function">
    <text evidence="1">Involved in the import of serine and threonine into the cell, with the concomitant import of sodium (symport system).</text>
</comment>
<comment type="catalytic activity">
    <reaction evidence="1">
        <text>L-serine(in) + Na(+)(in) = L-serine(out) + Na(+)(out)</text>
        <dbReference type="Rhea" id="RHEA:29575"/>
        <dbReference type="ChEBI" id="CHEBI:29101"/>
        <dbReference type="ChEBI" id="CHEBI:33384"/>
    </reaction>
    <physiologicalReaction direction="right-to-left" evidence="1">
        <dbReference type="Rhea" id="RHEA:29577"/>
    </physiologicalReaction>
</comment>
<comment type="catalytic activity">
    <reaction evidence="1">
        <text>L-threonine(in) + Na(+)(in) = L-threonine(out) + Na(+)(out)</text>
        <dbReference type="Rhea" id="RHEA:69999"/>
        <dbReference type="ChEBI" id="CHEBI:29101"/>
        <dbReference type="ChEBI" id="CHEBI:57926"/>
    </reaction>
    <physiologicalReaction direction="right-to-left" evidence="1">
        <dbReference type="Rhea" id="RHEA:70001"/>
    </physiologicalReaction>
</comment>
<comment type="subcellular location">
    <subcellularLocation>
        <location evidence="1">Cell membrane</location>
        <topology evidence="1">Multi-pass membrane protein</topology>
    </subcellularLocation>
</comment>
<comment type="similarity">
    <text evidence="1">Belongs to the dicarboxylate/amino acid:cation symporter (DAACS) (TC 2.A.23) family.</text>
</comment>
<proteinExistence type="inferred from homology"/>
<gene>
    <name evidence="1" type="primary">sstT</name>
    <name type="ordered locus">SPy_0324</name>
    <name type="ordered locus">M5005_Spy0275</name>
</gene>